<accession>P78023</accession>
<reference key="1">
    <citation type="journal article" date="1996" name="Nucleic Acids Res.">
        <title>Complete sequence analysis of the genome of the bacterium Mycoplasma pneumoniae.</title>
        <authorList>
            <person name="Himmelreich R."/>
            <person name="Hilbert H."/>
            <person name="Plagens H."/>
            <person name="Pirkl E."/>
            <person name="Li B.-C."/>
            <person name="Herrmann R."/>
        </authorList>
    </citation>
    <scope>NUCLEOTIDE SEQUENCE [LARGE SCALE GENOMIC DNA]</scope>
    <source>
        <strain>ATCC 29342 / M129 / Subtype 1</strain>
    </source>
</reference>
<dbReference type="EMBL" id="U00089">
    <property type="protein sequence ID" value="AAG34734.1"/>
    <property type="molecule type" value="Genomic_DNA"/>
</dbReference>
<dbReference type="PIR" id="S73363">
    <property type="entry name" value="S73363"/>
</dbReference>
<dbReference type="RefSeq" id="NP_109805.1">
    <property type="nucleotide sequence ID" value="NC_000912.1"/>
</dbReference>
<dbReference type="RefSeq" id="WP_010874474.1">
    <property type="nucleotide sequence ID" value="NZ_OU342337.1"/>
</dbReference>
<dbReference type="PDB" id="7OOD">
    <property type="method" value="EM"/>
    <property type="resolution" value="3.40 A"/>
    <property type="chains" value="p=1-127"/>
</dbReference>
<dbReference type="PDB" id="7P6Z">
    <property type="method" value="EM"/>
    <property type="resolution" value="3.50 A"/>
    <property type="chains" value="p=1-127"/>
</dbReference>
<dbReference type="PDB" id="7PAH">
    <property type="method" value="EM"/>
    <property type="resolution" value="9.50 A"/>
    <property type="chains" value="p=1-127"/>
</dbReference>
<dbReference type="PDB" id="7PAI">
    <property type="method" value="EM"/>
    <property type="resolution" value="6.70 A"/>
    <property type="chains" value="p=1-127"/>
</dbReference>
<dbReference type="PDB" id="7PAJ">
    <property type="method" value="EM"/>
    <property type="resolution" value="7.30 A"/>
    <property type="chains" value="p=1-127"/>
</dbReference>
<dbReference type="PDB" id="7PAK">
    <property type="method" value="EM"/>
    <property type="resolution" value="5.30 A"/>
    <property type="chains" value="p=1-127"/>
</dbReference>
<dbReference type="PDB" id="7PAL">
    <property type="method" value="EM"/>
    <property type="resolution" value="4.70 A"/>
    <property type="chains" value="p=1-127"/>
</dbReference>
<dbReference type="PDB" id="7PAM">
    <property type="method" value="EM"/>
    <property type="resolution" value="6.80 A"/>
    <property type="chains" value="p=1-127"/>
</dbReference>
<dbReference type="PDB" id="7PAN">
    <property type="method" value="EM"/>
    <property type="resolution" value="9.70 A"/>
    <property type="chains" value="p=1-127"/>
</dbReference>
<dbReference type="PDB" id="7PAO">
    <property type="method" value="EM"/>
    <property type="resolution" value="7.00 A"/>
    <property type="chains" value="p=1-127"/>
</dbReference>
<dbReference type="PDB" id="7PAQ">
    <property type="method" value="EM"/>
    <property type="resolution" value="8.90 A"/>
    <property type="chains" value="p=1-127"/>
</dbReference>
<dbReference type="PDB" id="7PAR">
    <property type="method" value="EM"/>
    <property type="resolution" value="8.20 A"/>
    <property type="chains" value="p=1-127"/>
</dbReference>
<dbReference type="PDB" id="7PAS">
    <property type="method" value="EM"/>
    <property type="resolution" value="16.00 A"/>
    <property type="chains" value="p=1-127"/>
</dbReference>
<dbReference type="PDB" id="7PAT">
    <property type="method" value="EM"/>
    <property type="resolution" value="9.20 A"/>
    <property type="chains" value="p=1-127"/>
</dbReference>
<dbReference type="PDB" id="7PAU">
    <property type="method" value="EM"/>
    <property type="resolution" value="8.30 A"/>
    <property type="chains" value="p=1-127"/>
</dbReference>
<dbReference type="PDB" id="7PH9">
    <property type="method" value="EM"/>
    <property type="resolution" value="8.70 A"/>
    <property type="chains" value="p=1-127"/>
</dbReference>
<dbReference type="PDB" id="7PHA">
    <property type="method" value="EM"/>
    <property type="resolution" value="8.50 A"/>
    <property type="chains" value="p=1-127"/>
</dbReference>
<dbReference type="PDB" id="7PHB">
    <property type="method" value="EM"/>
    <property type="resolution" value="4.90 A"/>
    <property type="chains" value="p=1-127"/>
</dbReference>
<dbReference type="PDB" id="7PHC">
    <property type="method" value="EM"/>
    <property type="resolution" value="9.90 A"/>
    <property type="chains" value="p=1-127"/>
</dbReference>
<dbReference type="PDB" id="7PI8">
    <property type="method" value="EM"/>
    <property type="resolution" value="8.90 A"/>
    <property type="chains" value="p=1-127"/>
</dbReference>
<dbReference type="PDB" id="7PI9">
    <property type="method" value="EM"/>
    <property type="resolution" value="6.30 A"/>
    <property type="chains" value="p=1-127"/>
</dbReference>
<dbReference type="PDB" id="7PIA">
    <property type="method" value="EM"/>
    <property type="resolution" value="13.60 A"/>
    <property type="chains" value="p=1-127"/>
</dbReference>
<dbReference type="PDB" id="7PIB">
    <property type="method" value="EM"/>
    <property type="resolution" value="4.70 A"/>
    <property type="chains" value="p=1-127"/>
</dbReference>
<dbReference type="PDB" id="7PIC">
    <property type="method" value="EM"/>
    <property type="resolution" value="9.10 A"/>
    <property type="chains" value="p=1-127"/>
</dbReference>
<dbReference type="PDB" id="7PIO">
    <property type="method" value="EM"/>
    <property type="resolution" value="9.50 A"/>
    <property type="chains" value="p=1-127"/>
</dbReference>
<dbReference type="PDB" id="7PIP">
    <property type="method" value="EM"/>
    <property type="resolution" value="9.30 A"/>
    <property type="chains" value="p=1-127"/>
</dbReference>
<dbReference type="PDB" id="7PIQ">
    <property type="method" value="EM"/>
    <property type="resolution" value="9.70 A"/>
    <property type="chains" value="p=1-127"/>
</dbReference>
<dbReference type="PDB" id="7PIR">
    <property type="method" value="EM"/>
    <property type="resolution" value="12.10 A"/>
    <property type="chains" value="p=1-127"/>
</dbReference>
<dbReference type="PDB" id="7PIS">
    <property type="method" value="EM"/>
    <property type="resolution" value="15.00 A"/>
    <property type="chains" value="p=1-127"/>
</dbReference>
<dbReference type="PDB" id="7PIT">
    <property type="method" value="EM"/>
    <property type="resolution" value="5.70 A"/>
    <property type="chains" value="p=1-127"/>
</dbReference>
<dbReference type="PDB" id="8P7X">
    <property type="method" value="EM"/>
    <property type="resolution" value="3.03 A"/>
    <property type="chains" value="p=1-127"/>
</dbReference>
<dbReference type="PDB" id="8P7Y">
    <property type="method" value="EM"/>
    <property type="resolution" value="3.70 A"/>
    <property type="chains" value="p=1-127"/>
</dbReference>
<dbReference type="PDB" id="8P8B">
    <property type="method" value="EM"/>
    <property type="resolution" value="2.90 A"/>
    <property type="chains" value="p=1-127"/>
</dbReference>
<dbReference type="PDB" id="8P8V">
    <property type="method" value="EM"/>
    <property type="resolution" value="8.70 A"/>
    <property type="chains" value="p=1-127"/>
</dbReference>
<dbReference type="PDB" id="8P8W">
    <property type="method" value="EM"/>
    <property type="resolution" value="8.70 A"/>
    <property type="chains" value="p=1-127"/>
</dbReference>
<dbReference type="PDBsum" id="7OOD"/>
<dbReference type="PDBsum" id="7P6Z"/>
<dbReference type="PDBsum" id="7PAH"/>
<dbReference type="PDBsum" id="7PAI"/>
<dbReference type="PDBsum" id="7PAJ"/>
<dbReference type="PDBsum" id="7PAK"/>
<dbReference type="PDBsum" id="7PAL"/>
<dbReference type="PDBsum" id="7PAM"/>
<dbReference type="PDBsum" id="7PAN"/>
<dbReference type="PDBsum" id="7PAO"/>
<dbReference type="PDBsum" id="7PAQ"/>
<dbReference type="PDBsum" id="7PAR"/>
<dbReference type="PDBsum" id="7PAS"/>
<dbReference type="PDBsum" id="7PAT"/>
<dbReference type="PDBsum" id="7PAU"/>
<dbReference type="PDBsum" id="7PH9"/>
<dbReference type="PDBsum" id="7PHA"/>
<dbReference type="PDBsum" id="7PHB"/>
<dbReference type="PDBsum" id="7PHC"/>
<dbReference type="PDBsum" id="7PI8"/>
<dbReference type="PDBsum" id="7PI9"/>
<dbReference type="PDBsum" id="7PIA"/>
<dbReference type="PDBsum" id="7PIB"/>
<dbReference type="PDBsum" id="7PIC"/>
<dbReference type="PDBsum" id="7PIO"/>
<dbReference type="PDBsum" id="7PIP"/>
<dbReference type="PDBsum" id="7PIQ"/>
<dbReference type="PDBsum" id="7PIR"/>
<dbReference type="PDBsum" id="7PIS"/>
<dbReference type="PDBsum" id="7PIT"/>
<dbReference type="PDBsum" id="8P7X"/>
<dbReference type="PDBsum" id="8P7Y"/>
<dbReference type="PDBsum" id="8P8B"/>
<dbReference type="PDBsum" id="8P8V"/>
<dbReference type="PDBsum" id="8P8W"/>
<dbReference type="EMDB" id="EMD-13234"/>
<dbReference type="EMDB" id="EMD-13272"/>
<dbReference type="EMDB" id="EMD-13273"/>
<dbReference type="EMDB" id="EMD-13274"/>
<dbReference type="EMDB" id="EMD-13275"/>
<dbReference type="EMDB" id="EMD-13276"/>
<dbReference type="EMDB" id="EMD-13277"/>
<dbReference type="EMDB" id="EMD-13278"/>
<dbReference type="EMDB" id="EMD-13279"/>
<dbReference type="EMDB" id="EMD-13280"/>
<dbReference type="EMDB" id="EMD-13281"/>
<dbReference type="EMDB" id="EMD-13282"/>
<dbReference type="EMDB" id="EMD-13285"/>
<dbReference type="EMDB" id="EMD-13286"/>
<dbReference type="EMDB" id="EMD-13410"/>
<dbReference type="EMDB" id="EMD-13411"/>
<dbReference type="EMDB" id="EMD-13412"/>
<dbReference type="EMDB" id="EMD-13413"/>
<dbReference type="EMDB" id="EMD-13432"/>
<dbReference type="EMDB" id="EMD-13433"/>
<dbReference type="EMDB" id="EMD-13434"/>
<dbReference type="EMDB" id="EMD-13435"/>
<dbReference type="EMDB" id="EMD-13436"/>
<dbReference type="EMDB" id="EMD-13445"/>
<dbReference type="EMDB" id="EMD-13446"/>
<dbReference type="EMDB" id="EMD-13447"/>
<dbReference type="EMDB" id="EMD-13448"/>
<dbReference type="EMDB" id="EMD-13449"/>
<dbReference type="EMDB" id="EMD-13450"/>
<dbReference type="SMR" id="P78023"/>
<dbReference type="IntAct" id="P78023">
    <property type="interactions" value="1"/>
</dbReference>
<dbReference type="STRING" id="272634.MPN_117"/>
<dbReference type="EnsemblBacteria" id="AAG34734">
    <property type="protein sequence ID" value="AAG34734"/>
    <property type="gene ID" value="MPN_117"/>
</dbReference>
<dbReference type="GeneID" id="66609234"/>
<dbReference type="KEGG" id="mpn:MPN_117"/>
<dbReference type="PATRIC" id="fig|272634.6.peg.124"/>
<dbReference type="HOGENOM" id="CLU_123265_0_1_14"/>
<dbReference type="OrthoDB" id="9808966at2"/>
<dbReference type="BioCyc" id="MPNE272634:G1GJ3-196-MONOMER"/>
<dbReference type="Proteomes" id="UP000000808">
    <property type="component" value="Chromosome"/>
</dbReference>
<dbReference type="GO" id="GO:1990904">
    <property type="term" value="C:ribonucleoprotein complex"/>
    <property type="evidence" value="ECO:0007669"/>
    <property type="project" value="UniProtKB-KW"/>
</dbReference>
<dbReference type="GO" id="GO:0005840">
    <property type="term" value="C:ribosome"/>
    <property type="evidence" value="ECO:0007669"/>
    <property type="project" value="UniProtKB-KW"/>
</dbReference>
<dbReference type="GO" id="GO:0019843">
    <property type="term" value="F:rRNA binding"/>
    <property type="evidence" value="ECO:0007669"/>
    <property type="project" value="UniProtKB-UniRule"/>
</dbReference>
<dbReference type="GO" id="GO:0003735">
    <property type="term" value="F:structural constituent of ribosome"/>
    <property type="evidence" value="ECO:0007669"/>
    <property type="project" value="InterPro"/>
</dbReference>
<dbReference type="GO" id="GO:0000027">
    <property type="term" value="P:ribosomal large subunit assembly"/>
    <property type="evidence" value="ECO:0007669"/>
    <property type="project" value="UniProtKB-UniRule"/>
</dbReference>
<dbReference type="GO" id="GO:0006412">
    <property type="term" value="P:translation"/>
    <property type="evidence" value="ECO:0007669"/>
    <property type="project" value="InterPro"/>
</dbReference>
<dbReference type="CDD" id="cd07026">
    <property type="entry name" value="Ribosomal_L20"/>
    <property type="match status" value="1"/>
</dbReference>
<dbReference type="FunFam" id="1.10.1900.20:FF:000001">
    <property type="entry name" value="50S ribosomal protein L20"/>
    <property type="match status" value="1"/>
</dbReference>
<dbReference type="Gene3D" id="6.10.160.10">
    <property type="match status" value="1"/>
</dbReference>
<dbReference type="Gene3D" id="1.10.1900.20">
    <property type="entry name" value="Ribosomal protein L20"/>
    <property type="match status" value="1"/>
</dbReference>
<dbReference type="HAMAP" id="MF_00382">
    <property type="entry name" value="Ribosomal_bL20"/>
    <property type="match status" value="1"/>
</dbReference>
<dbReference type="InterPro" id="IPR005813">
    <property type="entry name" value="Ribosomal_bL20"/>
</dbReference>
<dbReference type="InterPro" id="IPR049946">
    <property type="entry name" value="RIBOSOMAL_L20_CS"/>
</dbReference>
<dbReference type="InterPro" id="IPR035566">
    <property type="entry name" value="Ribosomal_protein_bL20_C"/>
</dbReference>
<dbReference type="NCBIfam" id="TIGR01032">
    <property type="entry name" value="rplT_bact"/>
    <property type="match status" value="1"/>
</dbReference>
<dbReference type="PANTHER" id="PTHR10986">
    <property type="entry name" value="39S RIBOSOMAL PROTEIN L20"/>
    <property type="match status" value="1"/>
</dbReference>
<dbReference type="Pfam" id="PF00453">
    <property type="entry name" value="Ribosomal_L20"/>
    <property type="match status" value="1"/>
</dbReference>
<dbReference type="PRINTS" id="PR00062">
    <property type="entry name" value="RIBOSOMALL20"/>
</dbReference>
<dbReference type="SUPFAM" id="SSF74731">
    <property type="entry name" value="Ribosomal protein L20"/>
    <property type="match status" value="1"/>
</dbReference>
<dbReference type="PROSITE" id="PS00937">
    <property type="entry name" value="RIBOSOMAL_L20"/>
    <property type="match status" value="1"/>
</dbReference>
<comment type="function">
    <text evidence="1">Binds directly to 23S ribosomal RNA and is necessary for the in vitro assembly process of the 50S ribosomal subunit. It is not involved in the protein synthesizing functions of that subunit (By similarity).</text>
</comment>
<comment type="similarity">
    <text evidence="2">Belongs to the bacterial ribosomal protein bL20 family.</text>
</comment>
<keyword id="KW-0002">3D-structure</keyword>
<keyword id="KW-1185">Reference proteome</keyword>
<keyword id="KW-0687">Ribonucleoprotein</keyword>
<keyword id="KW-0689">Ribosomal protein</keyword>
<keyword id="KW-0694">RNA-binding</keyword>
<keyword id="KW-0699">rRNA-binding</keyword>
<protein>
    <recommendedName>
        <fullName evidence="2">Large ribosomal subunit protein bL20</fullName>
    </recommendedName>
    <alternativeName>
        <fullName>50S ribosomal protein L20</fullName>
    </alternativeName>
</protein>
<evidence type="ECO:0000250" key="1"/>
<evidence type="ECO:0000305" key="2"/>
<evidence type="ECO:0007829" key="3">
    <source>
        <dbReference type="PDB" id="8P8B"/>
    </source>
</evidence>
<gene>
    <name type="primary">rplT</name>
    <name type="ordered locus">MPN_117</name>
    <name type="ORF">MP037</name>
</gene>
<organism>
    <name type="scientific">Mycoplasma pneumoniae (strain ATCC 29342 / M129 / Subtype 1)</name>
    <name type="common">Mycoplasmoides pneumoniae</name>
    <dbReference type="NCBI Taxonomy" id="272634"/>
    <lineage>
        <taxon>Bacteria</taxon>
        <taxon>Bacillati</taxon>
        <taxon>Mycoplasmatota</taxon>
        <taxon>Mycoplasmoidales</taxon>
        <taxon>Mycoplasmoidaceae</taxon>
        <taxon>Mycoplasmoides</taxon>
    </lineage>
</organism>
<proteinExistence type="evidence at protein level"/>
<sequence>MRIKGGKQTRVRRKKWLKQASGSFGTRHASYKVAKQTVIQAAKYAYRDRRNKKRDFRSLWILRLNAALREQGMTYSVFINLLKKHNIEINRKVLSELAIKEPSKFNLIVQKVKSEQPKAAKPAALGN</sequence>
<feature type="chain" id="PRO_0000177187" description="Large ribosomal subunit protein bL20">
    <location>
        <begin position="1"/>
        <end position="127"/>
    </location>
</feature>
<feature type="helix" evidence="3">
    <location>
        <begin position="8"/>
        <end position="19"/>
    </location>
</feature>
<feature type="turn" evidence="3">
    <location>
        <begin position="20"/>
        <end position="22"/>
    </location>
</feature>
<feature type="helix" evidence="3">
    <location>
        <begin position="26"/>
        <end position="29"/>
    </location>
</feature>
<feature type="helix" evidence="3">
    <location>
        <begin position="31"/>
        <end position="69"/>
    </location>
</feature>
<feature type="turn" evidence="3">
    <location>
        <begin position="70"/>
        <end position="72"/>
    </location>
</feature>
<feature type="helix" evidence="3">
    <location>
        <begin position="75"/>
        <end position="84"/>
    </location>
</feature>
<feature type="helix" evidence="3">
    <location>
        <begin position="91"/>
        <end position="100"/>
    </location>
</feature>
<feature type="helix" evidence="3">
    <location>
        <begin position="102"/>
        <end position="114"/>
    </location>
</feature>
<name>RL20_MYCPN</name>